<sequence length="140" mass="15211">MNTLRYFDFGAARPVLLLIARIAVVLIFIIFGFPKMMGFDGTVQYMASLGAPMPMLAAIIAVVMEVPAAILIVLGFFTRPLAVLFIFYTLGTAVIGHHYWDMTGDAVGPNMINFWKNVSIAGAFLLLAITGPGAISLDRR</sequence>
<feature type="chain" id="PRO_0000169257" description="Inner membrane protein YphA">
    <location>
        <begin position="1"/>
        <end position="140"/>
    </location>
</feature>
<feature type="topological domain" description="Cytoplasmic" evidence="1">
    <location>
        <begin position="1"/>
        <end position="13"/>
    </location>
</feature>
<feature type="transmembrane region" description="Helical" evidence="1">
    <location>
        <begin position="14"/>
        <end position="34"/>
    </location>
</feature>
<feature type="topological domain" description="Periplasmic" evidence="1">
    <location>
        <begin position="35"/>
        <end position="56"/>
    </location>
</feature>
<feature type="transmembrane region" description="Helical" evidence="1">
    <location>
        <begin position="57"/>
        <end position="77"/>
    </location>
</feature>
<feature type="topological domain" description="Cytoplasmic" evidence="1">
    <location>
        <begin position="78"/>
        <end position="79"/>
    </location>
</feature>
<feature type="transmembrane region" description="Helical" evidence="1">
    <location>
        <begin position="80"/>
        <end position="100"/>
    </location>
</feature>
<feature type="topological domain" description="Periplasmic" evidence="1">
    <location>
        <begin position="101"/>
        <end position="116"/>
    </location>
</feature>
<feature type="transmembrane region" description="Helical" evidence="1">
    <location>
        <begin position="117"/>
        <end position="137"/>
    </location>
</feature>
<feature type="topological domain" description="Cytoplasmic" evidence="1">
    <location>
        <begin position="138"/>
        <end position="140"/>
    </location>
</feature>
<protein>
    <recommendedName>
        <fullName>Inner membrane protein YphA</fullName>
    </recommendedName>
</protein>
<organism>
    <name type="scientific">Escherichia coli (strain K12)</name>
    <dbReference type="NCBI Taxonomy" id="83333"/>
    <lineage>
        <taxon>Bacteria</taxon>
        <taxon>Pseudomonadati</taxon>
        <taxon>Pseudomonadota</taxon>
        <taxon>Gammaproteobacteria</taxon>
        <taxon>Enterobacterales</taxon>
        <taxon>Enterobacteriaceae</taxon>
        <taxon>Escherichia</taxon>
    </lineage>
</organism>
<name>YPHA_ECOLI</name>
<keyword id="KW-0997">Cell inner membrane</keyword>
<keyword id="KW-1003">Cell membrane</keyword>
<keyword id="KW-0472">Membrane</keyword>
<keyword id="KW-1185">Reference proteome</keyword>
<keyword id="KW-0812">Transmembrane</keyword>
<keyword id="KW-1133">Transmembrane helix</keyword>
<gene>
    <name type="primary">yphA</name>
    <name type="ordered locus">b2543</name>
    <name type="ordered locus">JW2527</name>
</gene>
<reference key="1">
    <citation type="submission" date="1997-05" db="EMBL/GenBank/DDBJ databases">
        <authorList>
            <person name="Diaz E."/>
            <person name="Ferrandez A."/>
            <person name="Garcia J.L."/>
        </authorList>
    </citation>
    <scope>NUCLEOTIDE SEQUENCE [GENOMIC DNA]</scope>
    <source>
        <strain>K12 / MC1061 / ATCC 53338 / DSM 7140</strain>
    </source>
</reference>
<reference key="2">
    <citation type="journal article" date="1997" name="DNA Res.">
        <title>Construction of a contiguous 874-kb sequence of the Escherichia coli-K12 genome corresponding to 50.0-68.8 min on the linkage map and analysis of its sequence features.</title>
        <authorList>
            <person name="Yamamoto Y."/>
            <person name="Aiba H."/>
            <person name="Baba T."/>
            <person name="Hayashi K."/>
            <person name="Inada T."/>
            <person name="Isono K."/>
            <person name="Itoh T."/>
            <person name="Kimura S."/>
            <person name="Kitagawa M."/>
            <person name="Makino K."/>
            <person name="Miki T."/>
            <person name="Mitsuhashi N."/>
            <person name="Mizobuchi K."/>
            <person name="Mori H."/>
            <person name="Nakade S."/>
            <person name="Nakamura Y."/>
            <person name="Nashimoto H."/>
            <person name="Oshima T."/>
            <person name="Oyama S."/>
            <person name="Saito N."/>
            <person name="Sampei G."/>
            <person name="Satoh Y."/>
            <person name="Sivasundaram S."/>
            <person name="Tagami H."/>
            <person name="Takahashi H."/>
            <person name="Takeda J."/>
            <person name="Takemoto K."/>
            <person name="Uehara K."/>
            <person name="Wada C."/>
            <person name="Yamagata S."/>
            <person name="Horiuchi T."/>
        </authorList>
    </citation>
    <scope>NUCLEOTIDE SEQUENCE [LARGE SCALE GENOMIC DNA]</scope>
    <source>
        <strain>K12 / W3110 / ATCC 27325 / DSM 5911</strain>
    </source>
</reference>
<reference key="3">
    <citation type="journal article" date="1997" name="Science">
        <title>The complete genome sequence of Escherichia coli K-12.</title>
        <authorList>
            <person name="Blattner F.R."/>
            <person name="Plunkett G. III"/>
            <person name="Bloch C.A."/>
            <person name="Perna N.T."/>
            <person name="Burland V."/>
            <person name="Riley M."/>
            <person name="Collado-Vides J."/>
            <person name="Glasner J.D."/>
            <person name="Rode C.K."/>
            <person name="Mayhew G.F."/>
            <person name="Gregor J."/>
            <person name="Davis N.W."/>
            <person name="Kirkpatrick H.A."/>
            <person name="Goeden M.A."/>
            <person name="Rose D.J."/>
            <person name="Mau B."/>
            <person name="Shao Y."/>
        </authorList>
    </citation>
    <scope>NUCLEOTIDE SEQUENCE [LARGE SCALE GENOMIC DNA]</scope>
    <source>
        <strain>K12 / MG1655 / ATCC 47076</strain>
    </source>
</reference>
<reference key="4">
    <citation type="journal article" date="2006" name="Mol. Syst. Biol.">
        <title>Highly accurate genome sequences of Escherichia coli K-12 strains MG1655 and W3110.</title>
        <authorList>
            <person name="Hayashi K."/>
            <person name="Morooka N."/>
            <person name="Yamamoto Y."/>
            <person name="Fujita K."/>
            <person name="Isono K."/>
            <person name="Choi S."/>
            <person name="Ohtsubo E."/>
            <person name="Baba T."/>
            <person name="Wanner B.L."/>
            <person name="Mori H."/>
            <person name="Horiuchi T."/>
        </authorList>
    </citation>
    <scope>NUCLEOTIDE SEQUENCE [LARGE SCALE GENOMIC DNA]</scope>
    <source>
        <strain>K12 / W3110 / ATCC 27325 / DSM 5911</strain>
    </source>
</reference>
<reference key="5">
    <citation type="journal article" date="2005" name="Science">
        <title>Global topology analysis of the Escherichia coli inner membrane proteome.</title>
        <authorList>
            <person name="Daley D.O."/>
            <person name="Rapp M."/>
            <person name="Granseth E."/>
            <person name="Melen K."/>
            <person name="Drew D."/>
            <person name="von Heijne G."/>
        </authorList>
    </citation>
    <scope>TOPOLOGY [LARGE SCALE ANALYSIS]</scope>
    <source>
        <strain>K12 / MG1655 / ATCC 47076</strain>
    </source>
</reference>
<comment type="subcellular location">
    <subcellularLocation>
        <location>Cell inner membrane</location>
        <topology>Multi-pass membrane protein</topology>
    </subcellularLocation>
</comment>
<comment type="similarity">
    <text evidence="2">Belongs to the DoxX family.</text>
</comment>
<comment type="sequence caution" evidence="2">
    <conflict type="erroneous initiation">
        <sequence resource="EMBL-CDS" id="BAA16446"/>
    </conflict>
</comment>
<comment type="sequence caution" evidence="2">
    <conflict type="erroneous initiation">
        <sequence resource="EMBL-CDS" id="CAA71953"/>
    </conflict>
</comment>
<proteinExistence type="evidence at protein level"/>
<accession>P0AD47</accession>
<accession>O08101</accession>
<accession>P77751</accession>
<evidence type="ECO:0000255" key="1"/>
<evidence type="ECO:0000305" key="2"/>
<dbReference type="EMBL" id="Y11070">
    <property type="protein sequence ID" value="CAA71953.1"/>
    <property type="status" value="ALT_INIT"/>
    <property type="molecule type" value="Genomic_DNA"/>
</dbReference>
<dbReference type="EMBL" id="U00096">
    <property type="protein sequence ID" value="AAC75596.2"/>
    <property type="molecule type" value="Genomic_DNA"/>
</dbReference>
<dbReference type="EMBL" id="AP009048">
    <property type="protein sequence ID" value="BAA16446.1"/>
    <property type="status" value="ALT_INIT"/>
    <property type="molecule type" value="Genomic_DNA"/>
</dbReference>
<dbReference type="PIR" id="F65031">
    <property type="entry name" value="F65031"/>
</dbReference>
<dbReference type="RefSeq" id="NP_417038.4">
    <property type="nucleotide sequence ID" value="NC_000913.3"/>
</dbReference>
<dbReference type="RefSeq" id="WP_001094726.1">
    <property type="nucleotide sequence ID" value="NZ_STEB01000011.1"/>
</dbReference>
<dbReference type="BioGRID" id="4260605">
    <property type="interactions" value="11"/>
</dbReference>
<dbReference type="FunCoup" id="P0AD47">
    <property type="interactions" value="189"/>
</dbReference>
<dbReference type="STRING" id="511145.b2543"/>
<dbReference type="PaxDb" id="511145-b2543"/>
<dbReference type="EnsemblBacteria" id="AAC75596">
    <property type="protein sequence ID" value="AAC75596"/>
    <property type="gene ID" value="b2543"/>
</dbReference>
<dbReference type="GeneID" id="947365"/>
<dbReference type="KEGG" id="ecj:JW2527"/>
<dbReference type="KEGG" id="eco:b2543"/>
<dbReference type="KEGG" id="ecoc:C3026_14085"/>
<dbReference type="PATRIC" id="fig|1411691.4.peg.4191"/>
<dbReference type="EchoBASE" id="EB3235"/>
<dbReference type="eggNOG" id="COG2259">
    <property type="taxonomic scope" value="Bacteria"/>
</dbReference>
<dbReference type="HOGENOM" id="CLU_058421_8_1_6"/>
<dbReference type="InParanoid" id="P0AD47"/>
<dbReference type="OMA" id="FCTRPLA"/>
<dbReference type="OrthoDB" id="9792760at2"/>
<dbReference type="PhylomeDB" id="P0AD47"/>
<dbReference type="BioCyc" id="EcoCyc:G7337-MONOMER"/>
<dbReference type="PRO" id="PR:P0AD47"/>
<dbReference type="Proteomes" id="UP000000625">
    <property type="component" value="Chromosome"/>
</dbReference>
<dbReference type="GO" id="GO:0005886">
    <property type="term" value="C:plasma membrane"/>
    <property type="evidence" value="ECO:0000314"/>
    <property type="project" value="EcoCyc"/>
</dbReference>
<dbReference type="InterPro" id="IPR032808">
    <property type="entry name" value="DoxX"/>
</dbReference>
<dbReference type="InterPro" id="IPR051907">
    <property type="entry name" value="DoxX-like_oxidoreductase"/>
</dbReference>
<dbReference type="PANTHER" id="PTHR33452:SF1">
    <property type="entry name" value="INNER MEMBRANE PROTEIN YPHA-RELATED"/>
    <property type="match status" value="1"/>
</dbReference>
<dbReference type="PANTHER" id="PTHR33452">
    <property type="entry name" value="OXIDOREDUCTASE CATD-RELATED"/>
    <property type="match status" value="1"/>
</dbReference>
<dbReference type="Pfam" id="PF07681">
    <property type="entry name" value="DoxX"/>
    <property type="match status" value="1"/>
</dbReference>